<evidence type="ECO:0000255" key="1">
    <source>
        <dbReference type="HAMAP-Rule" id="MF_00170"/>
    </source>
</evidence>
<feature type="chain" id="PRO_1000097639" description="Ribose-5-phosphate isomerase A">
    <location>
        <begin position="1"/>
        <end position="223"/>
    </location>
</feature>
<feature type="active site" description="Proton acceptor" evidence="1">
    <location>
        <position position="105"/>
    </location>
</feature>
<feature type="binding site" evidence="1">
    <location>
        <begin position="32"/>
        <end position="35"/>
    </location>
    <ligand>
        <name>substrate</name>
    </ligand>
</feature>
<feature type="binding site" evidence="1">
    <location>
        <begin position="83"/>
        <end position="86"/>
    </location>
    <ligand>
        <name>substrate</name>
    </ligand>
</feature>
<feature type="binding site" evidence="1">
    <location>
        <begin position="96"/>
        <end position="99"/>
    </location>
    <ligand>
        <name>substrate</name>
    </ligand>
</feature>
<feature type="binding site" evidence="1">
    <location>
        <position position="123"/>
    </location>
    <ligand>
        <name>substrate</name>
    </ligand>
</feature>
<protein>
    <recommendedName>
        <fullName evidence="1">Ribose-5-phosphate isomerase A</fullName>
        <ecNumber evidence="1">5.3.1.6</ecNumber>
    </recommendedName>
    <alternativeName>
        <fullName evidence="1">Phosphoriboisomerase A</fullName>
        <shortName evidence="1">PRI</shortName>
    </alternativeName>
</protein>
<name>RPIA_ACIBC</name>
<dbReference type="EC" id="5.3.1.6" evidence="1"/>
<dbReference type="EMBL" id="CP000863">
    <property type="protein sequence ID" value="ACC57338.1"/>
    <property type="molecule type" value="Genomic_DNA"/>
</dbReference>
<dbReference type="RefSeq" id="WP_000061059.1">
    <property type="nucleotide sequence ID" value="NZ_CP031380.1"/>
</dbReference>
<dbReference type="SMR" id="B2I2V7"/>
<dbReference type="KEGG" id="abc:ACICU_02026"/>
<dbReference type="HOGENOM" id="CLU_056590_1_1_6"/>
<dbReference type="UniPathway" id="UPA00115">
    <property type="reaction ID" value="UER00412"/>
</dbReference>
<dbReference type="Proteomes" id="UP000008839">
    <property type="component" value="Chromosome"/>
</dbReference>
<dbReference type="GO" id="GO:0005829">
    <property type="term" value="C:cytosol"/>
    <property type="evidence" value="ECO:0007669"/>
    <property type="project" value="TreeGrafter"/>
</dbReference>
<dbReference type="GO" id="GO:0004751">
    <property type="term" value="F:ribose-5-phosphate isomerase activity"/>
    <property type="evidence" value="ECO:0007669"/>
    <property type="project" value="UniProtKB-UniRule"/>
</dbReference>
<dbReference type="GO" id="GO:0006014">
    <property type="term" value="P:D-ribose metabolic process"/>
    <property type="evidence" value="ECO:0007669"/>
    <property type="project" value="TreeGrafter"/>
</dbReference>
<dbReference type="GO" id="GO:0009052">
    <property type="term" value="P:pentose-phosphate shunt, non-oxidative branch"/>
    <property type="evidence" value="ECO:0007669"/>
    <property type="project" value="UniProtKB-UniRule"/>
</dbReference>
<dbReference type="CDD" id="cd01398">
    <property type="entry name" value="RPI_A"/>
    <property type="match status" value="1"/>
</dbReference>
<dbReference type="FunFam" id="3.30.70.260:FF:000004">
    <property type="entry name" value="Ribose-5-phosphate isomerase A"/>
    <property type="match status" value="1"/>
</dbReference>
<dbReference type="FunFam" id="3.40.50.1360:FF:000001">
    <property type="entry name" value="Ribose-5-phosphate isomerase A"/>
    <property type="match status" value="1"/>
</dbReference>
<dbReference type="Gene3D" id="3.30.70.260">
    <property type="match status" value="1"/>
</dbReference>
<dbReference type="Gene3D" id="3.40.50.1360">
    <property type="match status" value="1"/>
</dbReference>
<dbReference type="HAMAP" id="MF_00170">
    <property type="entry name" value="Rib_5P_isom_A"/>
    <property type="match status" value="1"/>
</dbReference>
<dbReference type="InterPro" id="IPR037171">
    <property type="entry name" value="NagB/RpiA_transferase-like"/>
</dbReference>
<dbReference type="InterPro" id="IPR020672">
    <property type="entry name" value="Ribose5P_isomerase_typA_subgr"/>
</dbReference>
<dbReference type="InterPro" id="IPR004788">
    <property type="entry name" value="Ribose5P_isomerase_type_A"/>
</dbReference>
<dbReference type="NCBIfam" id="NF001924">
    <property type="entry name" value="PRK00702.1"/>
    <property type="match status" value="1"/>
</dbReference>
<dbReference type="NCBIfam" id="TIGR00021">
    <property type="entry name" value="rpiA"/>
    <property type="match status" value="1"/>
</dbReference>
<dbReference type="PANTHER" id="PTHR11934">
    <property type="entry name" value="RIBOSE-5-PHOSPHATE ISOMERASE"/>
    <property type="match status" value="1"/>
</dbReference>
<dbReference type="PANTHER" id="PTHR11934:SF0">
    <property type="entry name" value="RIBOSE-5-PHOSPHATE ISOMERASE"/>
    <property type="match status" value="1"/>
</dbReference>
<dbReference type="Pfam" id="PF06026">
    <property type="entry name" value="Rib_5-P_isom_A"/>
    <property type="match status" value="1"/>
</dbReference>
<dbReference type="SUPFAM" id="SSF75445">
    <property type="entry name" value="D-ribose-5-phosphate isomerase (RpiA), lid domain"/>
    <property type="match status" value="1"/>
</dbReference>
<dbReference type="SUPFAM" id="SSF100950">
    <property type="entry name" value="NagB/RpiA/CoA transferase-like"/>
    <property type="match status" value="1"/>
</dbReference>
<comment type="function">
    <text evidence="1">Catalyzes the reversible conversion of ribose-5-phosphate to ribulose 5-phosphate.</text>
</comment>
<comment type="catalytic activity">
    <reaction evidence="1">
        <text>aldehydo-D-ribose 5-phosphate = D-ribulose 5-phosphate</text>
        <dbReference type="Rhea" id="RHEA:14657"/>
        <dbReference type="ChEBI" id="CHEBI:58121"/>
        <dbReference type="ChEBI" id="CHEBI:58273"/>
        <dbReference type="EC" id="5.3.1.6"/>
    </reaction>
</comment>
<comment type="pathway">
    <text evidence="1">Carbohydrate degradation; pentose phosphate pathway; D-ribose 5-phosphate from D-ribulose 5-phosphate (non-oxidative stage): step 1/1.</text>
</comment>
<comment type="subunit">
    <text evidence="1">Homodimer.</text>
</comment>
<comment type="similarity">
    <text evidence="1">Belongs to the ribose 5-phosphate isomerase family.</text>
</comment>
<organism>
    <name type="scientific">Acinetobacter baumannii (strain ACICU)</name>
    <dbReference type="NCBI Taxonomy" id="405416"/>
    <lineage>
        <taxon>Bacteria</taxon>
        <taxon>Pseudomonadati</taxon>
        <taxon>Pseudomonadota</taxon>
        <taxon>Gammaproteobacteria</taxon>
        <taxon>Moraxellales</taxon>
        <taxon>Moraxellaceae</taxon>
        <taxon>Acinetobacter</taxon>
        <taxon>Acinetobacter calcoaceticus/baumannii complex</taxon>
    </lineage>
</organism>
<keyword id="KW-0413">Isomerase</keyword>
<reference key="1">
    <citation type="journal article" date="2008" name="Antimicrob. Agents Chemother.">
        <title>Whole-genome pyrosequencing of an epidemic multidrug-resistant Acinetobacter baumannii strain belonging to the European clone II group.</title>
        <authorList>
            <person name="Iacono M."/>
            <person name="Villa L."/>
            <person name="Fortini D."/>
            <person name="Bordoni R."/>
            <person name="Imperi F."/>
            <person name="Bonnal R.J."/>
            <person name="Sicheritz-Ponten T."/>
            <person name="De Bellis G."/>
            <person name="Visca P."/>
            <person name="Cassone A."/>
            <person name="Carattoli A."/>
        </authorList>
    </citation>
    <scope>NUCLEOTIDE SEQUENCE [LARGE SCALE GENOMIC DNA]</scope>
    <source>
        <strain>ACICU</strain>
    </source>
</reference>
<sequence>MSLYATQDEKKQAAAKAALKHLPKGGILGVGTGSTVNFLIDLLPELQLEAAVASSQATADRLKKLGIEVVDMNHVGSLDAYVDGADEIDRHMHMIKGGGAALTREKIVASIAKKFVCIVDDSKWVDQLGRDFPLPVEVIPMARSAVARKLVSLGGDPVYREGVVTDNGNVILDVFNLNILNAIDLEKTINNIPGVVTNGIFALNPATIAIVATNDGIEERTAQ</sequence>
<proteinExistence type="inferred from homology"/>
<accession>B2I2V7</accession>
<gene>
    <name evidence="1" type="primary">rpiA</name>
    <name type="ordered locus">ACICU_02026</name>
</gene>